<comment type="function">
    <text evidence="1">Cytokine that can act as a growth factor for activated T and NK cells, enhance the lytic activity of NK/lymphokine-activated killer cells, and stimulate the production of IFN-gamma by resting PBMC.</text>
</comment>
<comment type="function">
    <text evidence="1">Associates with IL23A to form the IL-23 interleukin, a heterodimeric cytokine which functions in innate and adaptive immunity. IL-23 may constitute with IL-17 an acute response to infection in peripheral tissues. IL-23 binds to a heterodimeric receptor complex composed of IL12RB1 and IL23R, activates the Jak-Stat signaling cascade, stimulates memory rather than naive T-cells and promotes production of pro-inflammatory cytokines. IL-23 induces autoimmune inflammation and thus may be responsible for autoimmune inflammatory diseases and may be important for tumorigenesis (By similarity).</text>
</comment>
<comment type="subunit">
    <text evidence="2 3">Heterodimer with IL12A; disulfide-linked. The heterodimer is known as interleukin IL-12. Heterodimer with IL23A; disulfide-linked. The heterodimer is known as interleukin IL-23. Also secreted as a monomer. Interacts with NBR1; this interaction promotes IL-12 secretion (By similarity).</text>
</comment>
<comment type="subcellular location">
    <subcellularLocation>
        <location>Secreted</location>
    </subcellularLocation>
</comment>
<comment type="similarity">
    <text evidence="7">Belongs to the IL-12B family.</text>
</comment>
<feature type="signal peptide" evidence="1">
    <location>
        <begin position="1"/>
        <end position="22"/>
    </location>
</feature>
<feature type="chain" id="PRO_0000010926" description="Interleukin-12 subunit beta">
    <location>
        <begin position="23"/>
        <end position="327"/>
    </location>
</feature>
<feature type="domain" description="Ig-like C2-type">
    <location>
        <begin position="23"/>
        <end position="106"/>
    </location>
</feature>
<feature type="domain" description="Fibronectin type-III" evidence="6">
    <location>
        <begin position="238"/>
        <end position="327"/>
    </location>
</feature>
<feature type="glycosylation site" description="N-linked (GlcNAc...) asparagine" evidence="4">
    <location>
        <position position="223"/>
    </location>
</feature>
<feature type="disulfide bond" evidence="5">
    <location>
        <begin position="50"/>
        <end position="90"/>
    </location>
</feature>
<feature type="disulfide bond" description="Interchain (with C-98 in IL12A)" evidence="5">
    <location>
        <position position="200"/>
    </location>
</feature>
<proteinExistence type="evidence at transcript level"/>
<evidence type="ECO:0000250" key="1"/>
<evidence type="ECO:0000250" key="2">
    <source>
        <dbReference type="UniProtKB" id="P29460"/>
    </source>
</evidence>
<evidence type="ECO:0000250" key="3">
    <source>
        <dbReference type="UniProtKB" id="P43432"/>
    </source>
</evidence>
<evidence type="ECO:0000255" key="4"/>
<evidence type="ECO:0000255" key="5">
    <source>
        <dbReference type="PROSITE-ProRule" id="PRU00114"/>
    </source>
</evidence>
<evidence type="ECO:0000255" key="6">
    <source>
        <dbReference type="PROSITE-ProRule" id="PRU00316"/>
    </source>
</evidence>
<evidence type="ECO:0000305" key="7"/>
<gene>
    <name type="primary">IL12B</name>
</gene>
<reference key="1">
    <citation type="journal article" date="1999" name="DNA Seq.">
        <title>The characterisation of a cervine immunoregulatory cytokine, interleukin 12.</title>
        <authorList>
            <person name="Lockhart E."/>
            <person name="Slobbe L."/>
            <person name="Buchan G."/>
        </authorList>
    </citation>
    <scope>NUCLEOTIDE SEQUENCE [MRNA]</scope>
</reference>
<name>IL12B_CEREL</name>
<protein>
    <recommendedName>
        <fullName>Interleukin-12 subunit beta</fullName>
        <shortName>IL-12B</shortName>
    </recommendedName>
    <alternativeName>
        <fullName>Cytotoxic lymphocyte maturation factor 40 kDa subunit</fullName>
        <shortName>CLMF p40</shortName>
    </alternativeName>
    <alternativeName>
        <fullName>IL-12 subunit p40</fullName>
    </alternativeName>
</protein>
<dbReference type="EMBL" id="U57752">
    <property type="protein sequence ID" value="AAB02258.1"/>
    <property type="molecule type" value="mRNA"/>
</dbReference>
<dbReference type="SMR" id="Q28234"/>
<dbReference type="GlyCosmos" id="Q28234">
    <property type="glycosylation" value="1 site, No reported glycans"/>
</dbReference>
<dbReference type="GO" id="GO:0005615">
    <property type="term" value="C:extracellular space"/>
    <property type="evidence" value="ECO:0007669"/>
    <property type="project" value="UniProtKB-KW"/>
</dbReference>
<dbReference type="GO" id="GO:0016020">
    <property type="term" value="C:membrane"/>
    <property type="evidence" value="ECO:0007669"/>
    <property type="project" value="InterPro"/>
</dbReference>
<dbReference type="GO" id="GO:0005125">
    <property type="term" value="F:cytokine activity"/>
    <property type="evidence" value="ECO:0007669"/>
    <property type="project" value="UniProtKB-KW"/>
</dbReference>
<dbReference type="GO" id="GO:0004896">
    <property type="term" value="F:cytokine receptor activity"/>
    <property type="evidence" value="ECO:0007669"/>
    <property type="project" value="InterPro"/>
</dbReference>
<dbReference type="GO" id="GO:0030101">
    <property type="term" value="P:natural killer cell activation"/>
    <property type="evidence" value="ECO:0000250"/>
    <property type="project" value="UniProtKB"/>
</dbReference>
<dbReference type="GO" id="GO:0042104">
    <property type="term" value="P:positive regulation of activated T cell proliferation"/>
    <property type="evidence" value="ECO:0000250"/>
    <property type="project" value="UniProtKB"/>
</dbReference>
<dbReference type="GO" id="GO:0042093">
    <property type="term" value="P:T-helper cell differentiation"/>
    <property type="evidence" value="ECO:0000250"/>
    <property type="project" value="UniProtKB"/>
</dbReference>
<dbReference type="CDD" id="cd00063">
    <property type="entry name" value="FN3"/>
    <property type="match status" value="1"/>
</dbReference>
<dbReference type="FunFam" id="2.60.40.10:FF:000959">
    <property type="entry name" value="Interleukin-12 subunit beta"/>
    <property type="match status" value="1"/>
</dbReference>
<dbReference type="FunFam" id="2.60.40.10:FF:001008">
    <property type="entry name" value="Interleukin-12 subunit beta"/>
    <property type="match status" value="1"/>
</dbReference>
<dbReference type="FunFam" id="2.60.40.10:FF:001009">
    <property type="entry name" value="Interleukin-12 subunit beta"/>
    <property type="match status" value="1"/>
</dbReference>
<dbReference type="Gene3D" id="2.60.40.10">
    <property type="entry name" value="Immunoglobulins"/>
    <property type="match status" value="3"/>
</dbReference>
<dbReference type="InterPro" id="IPR003961">
    <property type="entry name" value="FN3_dom"/>
</dbReference>
<dbReference type="InterPro" id="IPR036116">
    <property type="entry name" value="FN3_sf"/>
</dbReference>
<dbReference type="InterPro" id="IPR003530">
    <property type="entry name" value="Hematopoietin_rcpt_L_F3_CS"/>
</dbReference>
<dbReference type="InterPro" id="IPR007110">
    <property type="entry name" value="Ig-like_dom"/>
</dbReference>
<dbReference type="InterPro" id="IPR036179">
    <property type="entry name" value="Ig-like_dom_sf"/>
</dbReference>
<dbReference type="InterPro" id="IPR013783">
    <property type="entry name" value="Ig-like_fold"/>
</dbReference>
<dbReference type="InterPro" id="IPR003598">
    <property type="entry name" value="Ig_sub2"/>
</dbReference>
<dbReference type="InterPro" id="IPR050676">
    <property type="entry name" value="IL-12"/>
</dbReference>
<dbReference type="InterPro" id="IPR015528">
    <property type="entry name" value="IL-12_beta"/>
</dbReference>
<dbReference type="InterPro" id="IPR019482">
    <property type="entry name" value="IL-12_beta_cen-dom"/>
</dbReference>
<dbReference type="PANTHER" id="PTHR48485:SF4">
    <property type="entry name" value="INTERLEUKIN-12 SUBUNIT BETA"/>
    <property type="match status" value="1"/>
</dbReference>
<dbReference type="PANTHER" id="PTHR48485">
    <property type="entry name" value="INTERLEUKIN-12 SUBUNIT BETA-RELATED"/>
    <property type="match status" value="1"/>
</dbReference>
<dbReference type="Pfam" id="PF10420">
    <property type="entry name" value="IL12p40_C"/>
    <property type="match status" value="1"/>
</dbReference>
<dbReference type="PIRSF" id="PIRSF038007">
    <property type="entry name" value="IL_12_beta"/>
    <property type="match status" value="1"/>
</dbReference>
<dbReference type="PRINTS" id="PR01928">
    <property type="entry name" value="INTRLEUKN12B"/>
</dbReference>
<dbReference type="SMART" id="SM00408">
    <property type="entry name" value="IGc2"/>
    <property type="match status" value="1"/>
</dbReference>
<dbReference type="SUPFAM" id="SSF49265">
    <property type="entry name" value="Fibronectin type III"/>
    <property type="match status" value="2"/>
</dbReference>
<dbReference type="SUPFAM" id="SSF48726">
    <property type="entry name" value="Immunoglobulin"/>
    <property type="match status" value="1"/>
</dbReference>
<dbReference type="PROSITE" id="PS50853">
    <property type="entry name" value="FN3"/>
    <property type="match status" value="1"/>
</dbReference>
<dbReference type="PROSITE" id="PS01354">
    <property type="entry name" value="HEMATOPO_REC_L_F3"/>
    <property type="match status" value="1"/>
</dbReference>
<dbReference type="PROSITE" id="PS50835">
    <property type="entry name" value="IG_LIKE"/>
    <property type="match status" value="1"/>
</dbReference>
<keyword id="KW-0202">Cytokine</keyword>
<keyword id="KW-1015">Disulfide bond</keyword>
<keyword id="KW-0325">Glycoprotein</keyword>
<keyword id="KW-0393">Immunoglobulin domain</keyword>
<keyword id="KW-0964">Secreted</keyword>
<keyword id="KW-0732">Signal</keyword>
<accession>Q28234</accession>
<organism>
    <name type="scientific">Cervus elaphus</name>
    <name type="common">Red deer</name>
    <dbReference type="NCBI Taxonomy" id="9860"/>
    <lineage>
        <taxon>Eukaryota</taxon>
        <taxon>Metazoa</taxon>
        <taxon>Chordata</taxon>
        <taxon>Craniata</taxon>
        <taxon>Vertebrata</taxon>
        <taxon>Euteleostomi</taxon>
        <taxon>Mammalia</taxon>
        <taxon>Eutheria</taxon>
        <taxon>Laurasiatheria</taxon>
        <taxon>Artiodactyla</taxon>
        <taxon>Ruminantia</taxon>
        <taxon>Pecora</taxon>
        <taxon>Cervidae</taxon>
        <taxon>Cervinae</taxon>
        <taxon>Cervus</taxon>
    </lineage>
</organism>
<sequence length="327" mass="37145">MHPQQLVVSWFSLVLLTSPIVAIWELEKNVYVVELDWYPDAPGETVVLRCDTPEEDGITWTSDQSSEVLGSGKTLTVQVKEFGDAGQYTCHKGGEVLSRSLLLLHKKEDGIWSTDILKDQKEPKAKSFLKCEAKDYSGHFTCWWLTAISTDLKFSVKSSRGSSDPRGVTCGAASLSTEKVIVDHREYKKYTVECQEGSACPAAEESLPIEVVVEAVHKLKYENYTSSFFIRDIIKPDPPKNLQLRPLKNSRQVEVSWEYPDTWSTPHSYFSLTFCVQVQGKNKREKKLFMDQTSAKVTCHKDASIRVQARDRYYNSFWSEWASVSCS</sequence>